<dbReference type="EC" id="5.4.2.10" evidence="1"/>
<dbReference type="EMBL" id="CR378664">
    <property type="protein sequence ID" value="CAG19029.1"/>
    <property type="status" value="ALT_FRAME"/>
    <property type="molecule type" value="Genomic_DNA"/>
</dbReference>
<dbReference type="SMR" id="Q6LUJ6"/>
<dbReference type="STRING" id="298386.PBPRA0606"/>
<dbReference type="KEGG" id="ppr:PBPRA0606"/>
<dbReference type="eggNOG" id="COG1109">
    <property type="taxonomic scope" value="Bacteria"/>
</dbReference>
<dbReference type="HOGENOM" id="CLU_016950_7_0_6"/>
<dbReference type="Proteomes" id="UP000000593">
    <property type="component" value="Chromosome 1"/>
</dbReference>
<dbReference type="GO" id="GO:0005829">
    <property type="term" value="C:cytosol"/>
    <property type="evidence" value="ECO:0007669"/>
    <property type="project" value="TreeGrafter"/>
</dbReference>
<dbReference type="GO" id="GO:0000287">
    <property type="term" value="F:magnesium ion binding"/>
    <property type="evidence" value="ECO:0007669"/>
    <property type="project" value="UniProtKB-UniRule"/>
</dbReference>
<dbReference type="GO" id="GO:0008966">
    <property type="term" value="F:phosphoglucosamine mutase activity"/>
    <property type="evidence" value="ECO:0007669"/>
    <property type="project" value="UniProtKB-UniRule"/>
</dbReference>
<dbReference type="GO" id="GO:0004615">
    <property type="term" value="F:phosphomannomutase activity"/>
    <property type="evidence" value="ECO:0007669"/>
    <property type="project" value="TreeGrafter"/>
</dbReference>
<dbReference type="GO" id="GO:0005975">
    <property type="term" value="P:carbohydrate metabolic process"/>
    <property type="evidence" value="ECO:0007669"/>
    <property type="project" value="InterPro"/>
</dbReference>
<dbReference type="GO" id="GO:0009252">
    <property type="term" value="P:peptidoglycan biosynthetic process"/>
    <property type="evidence" value="ECO:0007669"/>
    <property type="project" value="TreeGrafter"/>
</dbReference>
<dbReference type="GO" id="GO:0006048">
    <property type="term" value="P:UDP-N-acetylglucosamine biosynthetic process"/>
    <property type="evidence" value="ECO:0007669"/>
    <property type="project" value="TreeGrafter"/>
</dbReference>
<dbReference type="CDD" id="cd05802">
    <property type="entry name" value="GlmM"/>
    <property type="match status" value="1"/>
</dbReference>
<dbReference type="FunFam" id="3.30.310.50:FF:000001">
    <property type="entry name" value="Phosphoglucosamine mutase"/>
    <property type="match status" value="1"/>
</dbReference>
<dbReference type="FunFam" id="3.40.120.10:FF:000001">
    <property type="entry name" value="Phosphoglucosamine mutase"/>
    <property type="match status" value="1"/>
</dbReference>
<dbReference type="FunFam" id="3.40.120.10:FF:000003">
    <property type="entry name" value="Phosphoglucosamine mutase"/>
    <property type="match status" value="1"/>
</dbReference>
<dbReference type="Gene3D" id="3.40.120.10">
    <property type="entry name" value="Alpha-D-Glucose-1,6-Bisphosphate, subunit A, domain 3"/>
    <property type="match status" value="3"/>
</dbReference>
<dbReference type="Gene3D" id="3.30.310.50">
    <property type="entry name" value="Alpha-D-phosphohexomutase, C-terminal domain"/>
    <property type="match status" value="1"/>
</dbReference>
<dbReference type="HAMAP" id="MF_01554_B">
    <property type="entry name" value="GlmM_B"/>
    <property type="match status" value="1"/>
</dbReference>
<dbReference type="InterPro" id="IPR005844">
    <property type="entry name" value="A-D-PHexomutase_a/b/a-I"/>
</dbReference>
<dbReference type="InterPro" id="IPR016055">
    <property type="entry name" value="A-D-PHexomutase_a/b/a-I/II/III"/>
</dbReference>
<dbReference type="InterPro" id="IPR005845">
    <property type="entry name" value="A-D-PHexomutase_a/b/a-II"/>
</dbReference>
<dbReference type="InterPro" id="IPR005846">
    <property type="entry name" value="A-D-PHexomutase_a/b/a-III"/>
</dbReference>
<dbReference type="InterPro" id="IPR005843">
    <property type="entry name" value="A-D-PHexomutase_C"/>
</dbReference>
<dbReference type="InterPro" id="IPR036900">
    <property type="entry name" value="A-D-PHexomutase_C_sf"/>
</dbReference>
<dbReference type="InterPro" id="IPR016066">
    <property type="entry name" value="A-D-PHexomutase_CS"/>
</dbReference>
<dbReference type="InterPro" id="IPR005841">
    <property type="entry name" value="Alpha-D-phosphohexomutase_SF"/>
</dbReference>
<dbReference type="InterPro" id="IPR006352">
    <property type="entry name" value="GlmM_bact"/>
</dbReference>
<dbReference type="InterPro" id="IPR050060">
    <property type="entry name" value="Phosphoglucosamine_mutase"/>
</dbReference>
<dbReference type="NCBIfam" id="TIGR01455">
    <property type="entry name" value="glmM"/>
    <property type="match status" value="1"/>
</dbReference>
<dbReference type="NCBIfam" id="NF008139">
    <property type="entry name" value="PRK10887.1"/>
    <property type="match status" value="1"/>
</dbReference>
<dbReference type="PANTHER" id="PTHR42946:SF1">
    <property type="entry name" value="PHOSPHOGLUCOMUTASE (ALPHA-D-GLUCOSE-1,6-BISPHOSPHATE-DEPENDENT)"/>
    <property type="match status" value="1"/>
</dbReference>
<dbReference type="PANTHER" id="PTHR42946">
    <property type="entry name" value="PHOSPHOHEXOSE MUTASE"/>
    <property type="match status" value="1"/>
</dbReference>
<dbReference type="Pfam" id="PF02878">
    <property type="entry name" value="PGM_PMM_I"/>
    <property type="match status" value="1"/>
</dbReference>
<dbReference type="Pfam" id="PF02879">
    <property type="entry name" value="PGM_PMM_II"/>
    <property type="match status" value="1"/>
</dbReference>
<dbReference type="Pfam" id="PF02880">
    <property type="entry name" value="PGM_PMM_III"/>
    <property type="match status" value="1"/>
</dbReference>
<dbReference type="Pfam" id="PF00408">
    <property type="entry name" value="PGM_PMM_IV"/>
    <property type="match status" value="1"/>
</dbReference>
<dbReference type="PRINTS" id="PR00509">
    <property type="entry name" value="PGMPMM"/>
</dbReference>
<dbReference type="SUPFAM" id="SSF55957">
    <property type="entry name" value="Phosphoglucomutase, C-terminal domain"/>
    <property type="match status" value="1"/>
</dbReference>
<dbReference type="SUPFAM" id="SSF53738">
    <property type="entry name" value="Phosphoglucomutase, first 3 domains"/>
    <property type="match status" value="3"/>
</dbReference>
<dbReference type="PROSITE" id="PS00710">
    <property type="entry name" value="PGM_PMM"/>
    <property type="match status" value="1"/>
</dbReference>
<name>GLMM_PHOPR</name>
<accession>Q6LUJ6</accession>
<protein>
    <recommendedName>
        <fullName evidence="1">Phosphoglucosamine mutase</fullName>
        <ecNumber evidence="1">5.4.2.10</ecNumber>
    </recommendedName>
</protein>
<gene>
    <name evidence="1" type="primary">glmM</name>
    <name type="ordered locus">PBPRA0606</name>
</gene>
<keyword id="KW-0413">Isomerase</keyword>
<keyword id="KW-0460">Magnesium</keyword>
<keyword id="KW-0479">Metal-binding</keyword>
<keyword id="KW-0597">Phosphoprotein</keyword>
<keyword id="KW-1185">Reference proteome</keyword>
<organism>
    <name type="scientific">Photobacterium profundum (strain SS9)</name>
    <dbReference type="NCBI Taxonomy" id="298386"/>
    <lineage>
        <taxon>Bacteria</taxon>
        <taxon>Pseudomonadati</taxon>
        <taxon>Pseudomonadota</taxon>
        <taxon>Gammaproteobacteria</taxon>
        <taxon>Vibrionales</taxon>
        <taxon>Vibrionaceae</taxon>
        <taxon>Photobacterium</taxon>
    </lineage>
</organism>
<proteinExistence type="inferred from homology"/>
<comment type="function">
    <text evidence="1">Catalyzes the conversion of glucosamine-6-phosphate to glucosamine-1-phosphate.</text>
</comment>
<comment type="catalytic activity">
    <reaction evidence="1">
        <text>alpha-D-glucosamine 1-phosphate = D-glucosamine 6-phosphate</text>
        <dbReference type="Rhea" id="RHEA:23424"/>
        <dbReference type="ChEBI" id="CHEBI:58516"/>
        <dbReference type="ChEBI" id="CHEBI:58725"/>
        <dbReference type="EC" id="5.4.2.10"/>
    </reaction>
</comment>
<comment type="cofactor">
    <cofactor evidence="1">
        <name>Mg(2+)</name>
        <dbReference type="ChEBI" id="CHEBI:18420"/>
    </cofactor>
    <text evidence="1">Binds 1 Mg(2+) ion per subunit.</text>
</comment>
<comment type="PTM">
    <text evidence="1">Activated by phosphorylation.</text>
</comment>
<comment type="similarity">
    <text evidence="1">Belongs to the phosphohexose mutase family.</text>
</comment>
<comment type="sequence caution" evidence="2">
    <conflict type="frameshift">
        <sequence resource="EMBL-CDS" id="CAG19029"/>
    </conflict>
</comment>
<reference key="1">
    <citation type="journal article" date="2005" name="Science">
        <title>Life at depth: Photobacterium profundum genome sequence and expression analysis.</title>
        <authorList>
            <person name="Vezzi A."/>
            <person name="Campanaro S."/>
            <person name="D'Angelo M."/>
            <person name="Simonato F."/>
            <person name="Vitulo N."/>
            <person name="Lauro F.M."/>
            <person name="Cestaro A."/>
            <person name="Malacrida G."/>
            <person name="Simionati B."/>
            <person name="Cannata N."/>
            <person name="Romualdi C."/>
            <person name="Bartlett D.H."/>
            <person name="Valle G."/>
        </authorList>
    </citation>
    <scope>NUCLEOTIDE SEQUENCE [LARGE SCALE GENOMIC DNA]</scope>
    <source>
        <strain>ATCC BAA-1253 / SS9</strain>
    </source>
</reference>
<evidence type="ECO:0000255" key="1">
    <source>
        <dbReference type="HAMAP-Rule" id="MF_01554"/>
    </source>
</evidence>
<evidence type="ECO:0000305" key="2"/>
<feature type="chain" id="PRO_0000147931" description="Phosphoglucosamine mutase">
    <location>
        <begin position="1"/>
        <end position="444"/>
    </location>
</feature>
<feature type="active site" description="Phosphoserine intermediate" evidence="1">
    <location>
        <position position="101"/>
    </location>
</feature>
<feature type="binding site" description="via phosphate group" evidence="1">
    <location>
        <position position="101"/>
    </location>
    <ligand>
        <name>Mg(2+)</name>
        <dbReference type="ChEBI" id="CHEBI:18420"/>
    </ligand>
</feature>
<feature type="binding site" evidence="1">
    <location>
        <position position="240"/>
    </location>
    <ligand>
        <name>Mg(2+)</name>
        <dbReference type="ChEBI" id="CHEBI:18420"/>
    </ligand>
</feature>
<feature type="binding site" evidence="1">
    <location>
        <position position="242"/>
    </location>
    <ligand>
        <name>Mg(2+)</name>
        <dbReference type="ChEBI" id="CHEBI:18420"/>
    </ligand>
</feature>
<feature type="binding site" evidence="1">
    <location>
        <position position="244"/>
    </location>
    <ligand>
        <name>Mg(2+)</name>
        <dbReference type="ChEBI" id="CHEBI:18420"/>
    </ligand>
</feature>
<feature type="modified residue" description="Phosphoserine" evidence="1">
    <location>
        <position position="101"/>
    </location>
</feature>
<sequence length="444" mass="47773">MAERKFFGTDGIRGLVGEGPITPEFVLKLGWAAGRVLSQQGTKKVLIGKDTRISGYMLESALEAGLAAAGLQQFTGPMPTPAVAYLTRTFRAEAGIVISASHNPYYDNGIKFFSSEGTKLPDAIELAIEAEMEKPLTCVESAMLGKAYRINDAAGRYIEFCKGTFPSQYDLSEYKIVVDCAHGATYHIAPNVFRELGAEVITIGCEPNGININDQVGATDVRALQAKVLEEKADFGIALDGDGDRVIMVDNEGNKVDGDQIAYIVARDALRRGELKGGVVGTLMTNLGMEVALKNLGIPFVRSKVGDRYVMEELQKHNWLIGAENSGHVILLDKITTGDGIVAGLQVMASIVGSKMTLKELSDGMTLFPQVLENIRFKGEGNPLESDAVIAAQKAVEAKLGDTGRVLLRKSGTEPLIRVMVEGENADLVQQYALEIAQAVKDNC</sequence>